<organism>
    <name type="scientific">Streptococcus equi subsp. equi (strain 4047)</name>
    <dbReference type="NCBI Taxonomy" id="553482"/>
    <lineage>
        <taxon>Bacteria</taxon>
        <taxon>Bacillati</taxon>
        <taxon>Bacillota</taxon>
        <taxon>Bacilli</taxon>
        <taxon>Lactobacillales</taxon>
        <taxon>Streptococcaceae</taxon>
        <taxon>Streptococcus</taxon>
    </lineage>
</organism>
<reference key="1">
    <citation type="journal article" date="2009" name="PLoS Pathog.">
        <title>Genomic evidence for the evolution of Streptococcus equi: host restriction, increased virulence, and genetic exchange with human pathogens.</title>
        <authorList>
            <person name="Holden M.T.G."/>
            <person name="Heather Z."/>
            <person name="Paillot R."/>
            <person name="Steward K.F."/>
            <person name="Webb K."/>
            <person name="Ainslie F."/>
            <person name="Jourdan T."/>
            <person name="Bason N.C."/>
            <person name="Holroyd N.E."/>
            <person name="Mungall K."/>
            <person name="Quail M.A."/>
            <person name="Sanders M."/>
            <person name="Simmonds M."/>
            <person name="Willey D."/>
            <person name="Brooks K."/>
            <person name="Aanensen D.M."/>
            <person name="Spratt B.G."/>
            <person name="Jolley K.A."/>
            <person name="Maiden M.C.J."/>
            <person name="Kehoe M."/>
            <person name="Chanter N."/>
            <person name="Bentley S.D."/>
            <person name="Robinson C."/>
            <person name="Maskell D.J."/>
            <person name="Parkhill J."/>
            <person name="Waller A.S."/>
        </authorList>
    </citation>
    <scope>NUCLEOTIDE SEQUENCE [LARGE SCALE GENOMIC DNA]</scope>
    <source>
        <strain>4047</strain>
    </source>
</reference>
<proteinExistence type="inferred from homology"/>
<accession>C0M7V3</accession>
<evidence type="ECO:0000255" key="1">
    <source>
        <dbReference type="HAMAP-Rule" id="MF_00337"/>
    </source>
</evidence>
<dbReference type="EC" id="3.1.11.6" evidence="1"/>
<dbReference type="EMBL" id="FM204883">
    <property type="protein sequence ID" value="CAW92956.1"/>
    <property type="molecule type" value="Genomic_DNA"/>
</dbReference>
<dbReference type="RefSeq" id="WP_012679184.1">
    <property type="nucleotide sequence ID" value="NC_012471.1"/>
</dbReference>
<dbReference type="SMR" id="C0M7V3"/>
<dbReference type="KEGG" id="seu:SEQ_0641"/>
<dbReference type="HOGENOM" id="CLU_145918_3_2_9"/>
<dbReference type="OrthoDB" id="9798666at2"/>
<dbReference type="Proteomes" id="UP000001365">
    <property type="component" value="Chromosome"/>
</dbReference>
<dbReference type="GO" id="GO:0005829">
    <property type="term" value="C:cytosol"/>
    <property type="evidence" value="ECO:0007669"/>
    <property type="project" value="TreeGrafter"/>
</dbReference>
<dbReference type="GO" id="GO:0009318">
    <property type="term" value="C:exodeoxyribonuclease VII complex"/>
    <property type="evidence" value="ECO:0007669"/>
    <property type="project" value="InterPro"/>
</dbReference>
<dbReference type="GO" id="GO:0008855">
    <property type="term" value="F:exodeoxyribonuclease VII activity"/>
    <property type="evidence" value="ECO:0007669"/>
    <property type="project" value="UniProtKB-UniRule"/>
</dbReference>
<dbReference type="GO" id="GO:0006308">
    <property type="term" value="P:DNA catabolic process"/>
    <property type="evidence" value="ECO:0007669"/>
    <property type="project" value="UniProtKB-UniRule"/>
</dbReference>
<dbReference type="Gene3D" id="1.10.287.1040">
    <property type="entry name" value="Exonuclease VII, small subunit"/>
    <property type="match status" value="1"/>
</dbReference>
<dbReference type="HAMAP" id="MF_00337">
    <property type="entry name" value="Exonuc_7_S"/>
    <property type="match status" value="1"/>
</dbReference>
<dbReference type="InterPro" id="IPR003761">
    <property type="entry name" value="Exonuc_VII_S"/>
</dbReference>
<dbReference type="InterPro" id="IPR037004">
    <property type="entry name" value="Exonuc_VII_ssu_sf"/>
</dbReference>
<dbReference type="NCBIfam" id="NF002138">
    <property type="entry name" value="PRK00977.1-2"/>
    <property type="match status" value="1"/>
</dbReference>
<dbReference type="NCBIfam" id="TIGR01280">
    <property type="entry name" value="xseB"/>
    <property type="match status" value="1"/>
</dbReference>
<dbReference type="PANTHER" id="PTHR34137">
    <property type="entry name" value="EXODEOXYRIBONUCLEASE 7 SMALL SUBUNIT"/>
    <property type="match status" value="1"/>
</dbReference>
<dbReference type="PANTHER" id="PTHR34137:SF1">
    <property type="entry name" value="EXODEOXYRIBONUCLEASE 7 SMALL SUBUNIT"/>
    <property type="match status" value="1"/>
</dbReference>
<dbReference type="Pfam" id="PF02609">
    <property type="entry name" value="Exonuc_VII_S"/>
    <property type="match status" value="1"/>
</dbReference>
<dbReference type="PIRSF" id="PIRSF006488">
    <property type="entry name" value="Exonuc_VII_S"/>
    <property type="match status" value="1"/>
</dbReference>
<dbReference type="SUPFAM" id="SSF116842">
    <property type="entry name" value="XseB-like"/>
    <property type="match status" value="1"/>
</dbReference>
<gene>
    <name evidence="1" type="primary">xseB</name>
    <name type="ordered locus">SEQ_0641</name>
</gene>
<protein>
    <recommendedName>
        <fullName evidence="1">Exodeoxyribonuclease 7 small subunit</fullName>
        <ecNumber evidence="1">3.1.11.6</ecNumber>
    </recommendedName>
    <alternativeName>
        <fullName evidence="1">Exodeoxyribonuclease VII small subunit</fullName>
        <shortName evidence="1">Exonuclease VII small subunit</shortName>
    </alternativeName>
</protein>
<feature type="chain" id="PRO_1000200260" description="Exodeoxyribonuclease 7 small subunit">
    <location>
        <begin position="1"/>
        <end position="71"/>
    </location>
</feature>
<name>EX7S_STRE4</name>
<keyword id="KW-0963">Cytoplasm</keyword>
<keyword id="KW-0269">Exonuclease</keyword>
<keyword id="KW-0378">Hydrolase</keyword>
<keyword id="KW-0540">Nuclease</keyword>
<comment type="function">
    <text evidence="1">Bidirectionally degrades single-stranded DNA into large acid-insoluble oligonucleotides, which are then degraded further into small acid-soluble oligonucleotides.</text>
</comment>
<comment type="catalytic activity">
    <reaction evidence="1">
        <text>Exonucleolytic cleavage in either 5'- to 3'- or 3'- to 5'-direction to yield nucleoside 5'-phosphates.</text>
        <dbReference type="EC" id="3.1.11.6"/>
    </reaction>
</comment>
<comment type="subunit">
    <text evidence="1">Heterooligomer composed of large and small subunits.</text>
</comment>
<comment type="subcellular location">
    <subcellularLocation>
        <location evidence="1">Cytoplasm</location>
    </subcellularLocation>
</comment>
<comment type="similarity">
    <text evidence="1">Belongs to the XseB family.</text>
</comment>
<sequence length="71" mass="7997">MSTKKIFEERLQELEAIVTRLENGDVPLEEAISEFQKGMVLSKDLQKTLQAAEKTLVKVMQADGTELEMDA</sequence>